<feature type="chain" id="PRO_0000104735" description="Large ribosomal subunit protein uL15">
    <location>
        <begin position="1"/>
        <end position="146"/>
    </location>
</feature>
<feature type="region of interest" description="Disordered" evidence="2">
    <location>
        <begin position="1"/>
        <end position="55"/>
    </location>
</feature>
<feature type="compositionally biased region" description="Basic and acidic residues" evidence="2">
    <location>
        <begin position="1"/>
        <end position="13"/>
    </location>
</feature>
<feature type="compositionally biased region" description="Gly residues" evidence="2">
    <location>
        <begin position="23"/>
        <end position="35"/>
    </location>
</feature>
<sequence>MKLHELHSAEGSRRNRKRVGRGTSSGYGKTSGRGQKGQLARQGGHTRLGFEGGQMPLFRTMPKRGFKNVNRKEYAIVNLDDLNKFEDGSEVTVATLKENGLVKKELSGVKLLGNGELKVKLTVKVNKVSAAAKEAVEAAGGTVEVI</sequence>
<evidence type="ECO:0000255" key="1">
    <source>
        <dbReference type="HAMAP-Rule" id="MF_01341"/>
    </source>
</evidence>
<evidence type="ECO:0000256" key="2">
    <source>
        <dbReference type="SAM" id="MobiDB-lite"/>
    </source>
</evidence>
<evidence type="ECO:0000305" key="3"/>
<name>RL15_LACAC</name>
<reference key="1">
    <citation type="journal article" date="2005" name="Proc. Natl. Acad. Sci. U.S.A.">
        <title>Complete genome sequence of the probiotic lactic acid bacterium Lactobacillus acidophilus NCFM.</title>
        <authorList>
            <person name="Altermann E."/>
            <person name="Russell W.M."/>
            <person name="Azcarate-Peril M.A."/>
            <person name="Barrangou R."/>
            <person name="Buck B.L."/>
            <person name="McAuliffe O."/>
            <person name="Souther N."/>
            <person name="Dobson A."/>
            <person name="Duong T."/>
            <person name="Callanan M."/>
            <person name="Lick S."/>
            <person name="Hamrick A."/>
            <person name="Cano R."/>
            <person name="Klaenhammer T.R."/>
        </authorList>
    </citation>
    <scope>NUCLEOTIDE SEQUENCE [LARGE SCALE GENOMIC DNA]</scope>
    <source>
        <strain>ATCC 700396 / NCK56 / N2 / NCFM</strain>
    </source>
</reference>
<protein>
    <recommendedName>
        <fullName evidence="1">Large ribosomal subunit protein uL15</fullName>
    </recommendedName>
    <alternativeName>
        <fullName evidence="3">50S ribosomal protein L15</fullName>
    </alternativeName>
</protein>
<accession>Q5FM72</accession>
<dbReference type="EMBL" id="CP000033">
    <property type="protein sequence ID" value="AAV42202.1"/>
    <property type="molecule type" value="Genomic_DNA"/>
</dbReference>
<dbReference type="RefSeq" id="WP_003549043.1">
    <property type="nucleotide sequence ID" value="NC_006814.3"/>
</dbReference>
<dbReference type="RefSeq" id="YP_193233.1">
    <property type="nucleotide sequence ID" value="NC_006814.3"/>
</dbReference>
<dbReference type="SMR" id="Q5FM72"/>
<dbReference type="STRING" id="272621.LBA0309"/>
<dbReference type="GeneID" id="93290582"/>
<dbReference type="KEGG" id="lac:LBA0309"/>
<dbReference type="PATRIC" id="fig|272621.13.peg.296"/>
<dbReference type="eggNOG" id="COG0200">
    <property type="taxonomic scope" value="Bacteria"/>
</dbReference>
<dbReference type="HOGENOM" id="CLU_055188_4_2_9"/>
<dbReference type="OrthoDB" id="9810293at2"/>
<dbReference type="BioCyc" id="LACI272621:G1G49-304-MONOMER"/>
<dbReference type="Proteomes" id="UP000006381">
    <property type="component" value="Chromosome"/>
</dbReference>
<dbReference type="GO" id="GO:0022625">
    <property type="term" value="C:cytosolic large ribosomal subunit"/>
    <property type="evidence" value="ECO:0007669"/>
    <property type="project" value="TreeGrafter"/>
</dbReference>
<dbReference type="GO" id="GO:0019843">
    <property type="term" value="F:rRNA binding"/>
    <property type="evidence" value="ECO:0007669"/>
    <property type="project" value="UniProtKB-UniRule"/>
</dbReference>
<dbReference type="GO" id="GO:0003735">
    <property type="term" value="F:structural constituent of ribosome"/>
    <property type="evidence" value="ECO:0007669"/>
    <property type="project" value="InterPro"/>
</dbReference>
<dbReference type="GO" id="GO:0006412">
    <property type="term" value="P:translation"/>
    <property type="evidence" value="ECO:0007669"/>
    <property type="project" value="UniProtKB-UniRule"/>
</dbReference>
<dbReference type="Gene3D" id="3.100.10.10">
    <property type="match status" value="1"/>
</dbReference>
<dbReference type="HAMAP" id="MF_01341">
    <property type="entry name" value="Ribosomal_uL15"/>
    <property type="match status" value="1"/>
</dbReference>
<dbReference type="InterPro" id="IPR030878">
    <property type="entry name" value="Ribosomal_uL15"/>
</dbReference>
<dbReference type="InterPro" id="IPR021131">
    <property type="entry name" value="Ribosomal_uL15/eL18"/>
</dbReference>
<dbReference type="InterPro" id="IPR036227">
    <property type="entry name" value="Ribosomal_uL15/eL18_sf"/>
</dbReference>
<dbReference type="InterPro" id="IPR005749">
    <property type="entry name" value="Ribosomal_uL15_bac-type"/>
</dbReference>
<dbReference type="InterPro" id="IPR001196">
    <property type="entry name" value="Ribosomal_uL15_CS"/>
</dbReference>
<dbReference type="NCBIfam" id="TIGR01071">
    <property type="entry name" value="rplO_bact"/>
    <property type="match status" value="1"/>
</dbReference>
<dbReference type="PANTHER" id="PTHR12934">
    <property type="entry name" value="50S RIBOSOMAL PROTEIN L15"/>
    <property type="match status" value="1"/>
</dbReference>
<dbReference type="PANTHER" id="PTHR12934:SF11">
    <property type="entry name" value="LARGE RIBOSOMAL SUBUNIT PROTEIN UL15M"/>
    <property type="match status" value="1"/>
</dbReference>
<dbReference type="Pfam" id="PF00828">
    <property type="entry name" value="Ribosomal_L27A"/>
    <property type="match status" value="1"/>
</dbReference>
<dbReference type="SUPFAM" id="SSF52080">
    <property type="entry name" value="Ribosomal proteins L15p and L18e"/>
    <property type="match status" value="1"/>
</dbReference>
<dbReference type="PROSITE" id="PS00475">
    <property type="entry name" value="RIBOSOMAL_L15"/>
    <property type="match status" value="1"/>
</dbReference>
<keyword id="KW-1185">Reference proteome</keyword>
<keyword id="KW-0687">Ribonucleoprotein</keyword>
<keyword id="KW-0689">Ribosomal protein</keyword>
<keyword id="KW-0694">RNA-binding</keyword>
<keyword id="KW-0699">rRNA-binding</keyword>
<organism>
    <name type="scientific">Lactobacillus acidophilus (strain ATCC 700396 / NCK56 / N2 / NCFM)</name>
    <dbReference type="NCBI Taxonomy" id="272621"/>
    <lineage>
        <taxon>Bacteria</taxon>
        <taxon>Bacillati</taxon>
        <taxon>Bacillota</taxon>
        <taxon>Bacilli</taxon>
        <taxon>Lactobacillales</taxon>
        <taxon>Lactobacillaceae</taxon>
        <taxon>Lactobacillus</taxon>
    </lineage>
</organism>
<gene>
    <name evidence="1" type="primary">rplO</name>
    <name type="ordered locus">LBA0309</name>
</gene>
<comment type="function">
    <text evidence="1">Binds to the 23S rRNA.</text>
</comment>
<comment type="subunit">
    <text evidence="1">Part of the 50S ribosomal subunit.</text>
</comment>
<comment type="similarity">
    <text evidence="1">Belongs to the universal ribosomal protein uL15 family.</text>
</comment>
<proteinExistence type="inferred from homology"/>